<keyword id="KW-0131">Cell cycle</keyword>
<keyword id="KW-0132">Cell division</keyword>
<keyword id="KW-0966">Cell projection</keyword>
<keyword id="KW-0963">Cytoplasm</keyword>
<keyword id="KW-0206">Cytoskeleton</keyword>
<keyword id="KW-0333">Golgi apparatus</keyword>
<keyword id="KW-0342">GTP-binding</keyword>
<keyword id="KW-0449">Lipoprotein</keyword>
<keyword id="KW-0460">Magnesium</keyword>
<keyword id="KW-0472">Membrane</keyword>
<keyword id="KW-0479">Metal-binding</keyword>
<keyword id="KW-0519">Myristate</keyword>
<keyword id="KW-0547">Nucleotide-binding</keyword>
<keyword id="KW-0539">Nucleus</keyword>
<keyword id="KW-0597">Phosphoprotein</keyword>
<keyword id="KW-0653">Protein transport</keyword>
<keyword id="KW-1185">Reference proteome</keyword>
<keyword id="KW-0813">Transport</keyword>
<feature type="initiator methionine" description="Removed" evidence="4">
    <location>
        <position position="1"/>
    </location>
</feature>
<feature type="chain" id="PRO_0000295293" description="ADP-ribosylation factor-like protein 3">
    <location>
        <begin position="2"/>
        <end position="182"/>
    </location>
</feature>
<feature type="binding site" evidence="1">
    <location>
        <begin position="24"/>
        <end position="31"/>
    </location>
    <ligand>
        <name>GTP</name>
        <dbReference type="ChEBI" id="CHEBI:37565"/>
    </ligand>
</feature>
<feature type="binding site" evidence="1">
    <location>
        <position position="31"/>
    </location>
    <ligand>
        <name>Mg(2+)</name>
        <dbReference type="ChEBI" id="CHEBI:18420"/>
    </ligand>
</feature>
<feature type="binding site" evidence="1">
    <location>
        <position position="48"/>
    </location>
    <ligand>
        <name>GTP</name>
        <dbReference type="ChEBI" id="CHEBI:37565"/>
    </ligand>
</feature>
<feature type="binding site" evidence="1">
    <location>
        <position position="48"/>
    </location>
    <ligand>
        <name>Mg(2+)</name>
        <dbReference type="ChEBI" id="CHEBI:18420"/>
    </ligand>
</feature>
<feature type="binding site" evidence="1">
    <location>
        <begin position="67"/>
        <end position="71"/>
    </location>
    <ligand>
        <name>GTP</name>
        <dbReference type="ChEBI" id="CHEBI:37565"/>
    </ligand>
</feature>
<feature type="binding site" evidence="1">
    <location>
        <position position="70"/>
    </location>
    <ligand>
        <name>GTP</name>
        <dbReference type="ChEBI" id="CHEBI:37565"/>
    </ligand>
</feature>
<feature type="binding site" evidence="1">
    <location>
        <begin position="126"/>
        <end position="129"/>
    </location>
    <ligand>
        <name>GTP</name>
        <dbReference type="ChEBI" id="CHEBI:37565"/>
    </ligand>
</feature>
<feature type="binding site" evidence="1">
    <location>
        <begin position="159"/>
        <end position="161"/>
    </location>
    <ligand>
        <name>GTP</name>
        <dbReference type="ChEBI" id="CHEBI:37565"/>
    </ligand>
</feature>
<feature type="modified residue" description="Phosphoserine" evidence="2">
    <location>
        <position position="5"/>
    </location>
</feature>
<feature type="lipid moiety-binding region" description="N-myristoyl glycine" evidence="4">
    <location>
        <position position="2"/>
    </location>
</feature>
<comment type="function">
    <text evidence="2 3">Small GTP-binding protein which cycles between an inactive GDP-bound and an active GTP-bound form, and the rate of cycling is regulated by guanine nucleotide exchange factors (GEF) and GTPase-activating proteins (GAP). Required for normal cytokinesis and cilia signaling. Requires assistance from GTPase-activating proteins (GAPs) like RP2 and PDE6D, in order to cycle between inactive GDP-bound and active GTP-bound forms. Required for targeting proteins to the cilium, including myristoylated NPHP3 and prenylated INPP5E. Targets NPHP3 to the ciliary membrane by releasing myristoylated NPHP3 from UNC119B cargo adapter into the cilium (By similarity). Required for PKD1:PKD2 complex targeting from the trans-Golgi network to the cilium (By similarity).</text>
</comment>
<comment type="subunit">
    <text evidence="2 3">Found in a complex with ARL3, RP2 and UNC119 (or UNC119B); RP2 induces hydrolysis of GTP ARL3 in the complex, leading to the release of UNC119 (or UNC119B). Interacts with RP2; interaction is direct and stimulated with the activated GTP-bound form of ARL3. Interacts with SYS1. Interacts with ARL2BP; the GTP-bound form interacts with ARL2BP. Microtubule-associated protein. Does not interact with TBCC (By similarity). Interacts with RP2. Interacts with PDE6D; the interaction occurs specifically with the GTP-bound form of ARL3. Interacts with GGA1; the interaction recruits PKD1:PKD2 complex to trans-Golgi network and is required for ciliary targeting of PKD1:PKD2 complex (By similarity). Interacts with DNAAF9 (By similarity).</text>
</comment>
<comment type="subcellular location">
    <subcellularLocation>
        <location evidence="1">Golgi apparatus membrane</location>
        <topology evidence="1">Peripheral membrane protein</topology>
        <orientation evidence="1">Cytoplasmic side</orientation>
    </subcellularLocation>
    <subcellularLocation>
        <location evidence="1">Cytoplasm</location>
        <location evidence="1">Cytoskeleton</location>
        <location evidence="1">Spindle</location>
    </subcellularLocation>
    <subcellularLocation>
        <location evidence="1">Nucleus</location>
    </subcellularLocation>
    <subcellularLocation>
        <location evidence="1">Cytoplasm</location>
        <location evidence="1">Cytoskeleton</location>
        <location evidence="1">Microtubule organizing center</location>
        <location evidence="1">Centrosome</location>
    </subcellularLocation>
    <subcellularLocation>
        <location evidence="1">Cytoplasm</location>
    </subcellularLocation>
    <subcellularLocation>
        <location evidence="2">Cell projection</location>
        <location evidence="2">Cilium</location>
    </subcellularLocation>
    <text evidence="1">Detected predominantly in the photoreceptor connecting cilium. Centrosome-associated throughout the cell cycle. Not detected to interphase microtubules. Present on the mitotic spindle (By similarity).</text>
</comment>
<comment type="similarity">
    <text evidence="5">Belongs to the small GTPase superfamily. Arf family.</text>
</comment>
<reference key="1">
    <citation type="submission" date="2005-04" db="EMBL/GenBank/DDBJ databases">
        <authorList>
            <person name="Liu G.Y."/>
            <person name="Xiong Z.Y."/>
        </authorList>
    </citation>
    <scope>NUCLEOTIDE SEQUENCE [LARGE SCALE MRNA]</scope>
</reference>
<organism>
    <name type="scientific">Sus scrofa</name>
    <name type="common">Pig</name>
    <dbReference type="NCBI Taxonomy" id="9823"/>
    <lineage>
        <taxon>Eukaryota</taxon>
        <taxon>Metazoa</taxon>
        <taxon>Chordata</taxon>
        <taxon>Craniata</taxon>
        <taxon>Vertebrata</taxon>
        <taxon>Euteleostomi</taxon>
        <taxon>Mammalia</taxon>
        <taxon>Eutheria</taxon>
        <taxon>Laurasiatheria</taxon>
        <taxon>Artiodactyla</taxon>
        <taxon>Suina</taxon>
        <taxon>Suidae</taxon>
        <taxon>Sus</taxon>
    </lineage>
</organism>
<evidence type="ECO:0000250" key="1"/>
<evidence type="ECO:0000250" key="2">
    <source>
        <dbReference type="UniProtKB" id="P36405"/>
    </source>
</evidence>
<evidence type="ECO:0000250" key="3">
    <source>
        <dbReference type="UniProtKB" id="Q9WUL7"/>
    </source>
</evidence>
<evidence type="ECO:0000255" key="4"/>
<evidence type="ECO:0000305" key="5"/>
<proteinExistence type="evidence at transcript level"/>
<sequence length="182" mass="20484">MGLLSILRKLKSAPDQEVRILLLGLDNAGKTTLLKQLASEDISHITPTQGFNIKSVQSQGFKLNVWDIGGQRKIRPYWRNYFENTDILIYVIDSADRKRFEETGQELAELLEEEKLSCVPVLIFANKQDLLTAAPASEIAEGLNLHTIRDRVWQIQSCSALTGEGVQDGMNWVCKNVNAKKK</sequence>
<protein>
    <recommendedName>
        <fullName>ADP-ribosylation factor-like protein 3</fullName>
    </recommendedName>
</protein>
<accession>Q52NJ4</accession>
<gene>
    <name type="primary">ARL3</name>
</gene>
<dbReference type="EMBL" id="AY996811">
    <property type="protein sequence ID" value="AAY17507.1"/>
    <property type="molecule type" value="mRNA"/>
</dbReference>
<dbReference type="RefSeq" id="NP_001026955.1">
    <property type="nucleotide sequence ID" value="NM_001031785.1"/>
</dbReference>
<dbReference type="SMR" id="Q52NJ4"/>
<dbReference type="FunCoup" id="Q52NJ4">
    <property type="interactions" value="378"/>
</dbReference>
<dbReference type="STRING" id="9823.ENSSSCP00000073948"/>
<dbReference type="GlyGen" id="Q52NJ4">
    <property type="glycosylation" value="1 site"/>
</dbReference>
<dbReference type="PaxDb" id="9823-ENSSSCP00000011279"/>
<dbReference type="PeptideAtlas" id="Q52NJ4"/>
<dbReference type="Ensembl" id="ENSSSCT00000054746.3">
    <property type="protein sequence ID" value="ENSSSCP00000055492.3"/>
    <property type="gene ID" value="ENSSSCG00000031782.3"/>
</dbReference>
<dbReference type="Ensembl" id="ENSSSCT00015026703.1">
    <property type="protein sequence ID" value="ENSSSCP00015010450.1"/>
    <property type="gene ID" value="ENSSSCG00015020007.1"/>
</dbReference>
<dbReference type="Ensembl" id="ENSSSCT00035109805.1">
    <property type="protein sequence ID" value="ENSSSCP00035047724.1"/>
    <property type="gene ID" value="ENSSSCG00035080198.1"/>
</dbReference>
<dbReference type="Ensembl" id="ENSSSCT00045031669.1">
    <property type="protein sequence ID" value="ENSSSCP00045021928.1"/>
    <property type="gene ID" value="ENSSSCG00045018550.1"/>
</dbReference>
<dbReference type="Ensembl" id="ENSSSCT00050062180.1">
    <property type="protein sequence ID" value="ENSSSCP00050026707.1"/>
    <property type="gene ID" value="ENSSSCG00050045679.1"/>
</dbReference>
<dbReference type="Ensembl" id="ENSSSCT00055007799.1">
    <property type="protein sequence ID" value="ENSSSCP00055006164.1"/>
    <property type="gene ID" value="ENSSSCG00055003961.1"/>
</dbReference>
<dbReference type="Ensembl" id="ENSSSCT00060034276.1">
    <property type="protein sequence ID" value="ENSSSCP00060014678.1"/>
    <property type="gene ID" value="ENSSSCG00060025283.1"/>
</dbReference>
<dbReference type="Ensembl" id="ENSSSCT00065006459.1">
    <property type="protein sequence ID" value="ENSSSCP00065002872.1"/>
    <property type="gene ID" value="ENSSSCG00065004696.1"/>
</dbReference>
<dbReference type="Ensembl" id="ENSSSCT00070022699.1">
    <property type="protein sequence ID" value="ENSSSCP00070018769.1"/>
    <property type="gene ID" value="ENSSSCG00070011641.1"/>
</dbReference>
<dbReference type="Ensembl" id="ENSSSCT00085004812">
    <property type="protein sequence ID" value="ENSSSCP00085003540"/>
    <property type="gene ID" value="ENSSSCG00085002693"/>
</dbReference>
<dbReference type="Ensembl" id="ENSSSCT00090053649">
    <property type="protein sequence ID" value="ENSSSCP00090033421"/>
    <property type="gene ID" value="ENSSSCG00090030275"/>
</dbReference>
<dbReference type="Ensembl" id="ENSSSCT00105058807">
    <property type="protein sequence ID" value="ENSSSCP00105041423"/>
    <property type="gene ID" value="ENSSSCG00105030975"/>
</dbReference>
<dbReference type="Ensembl" id="ENSSSCT00110049800">
    <property type="protein sequence ID" value="ENSSSCP00110035005"/>
    <property type="gene ID" value="ENSSSCG00110025740"/>
</dbReference>
<dbReference type="Ensembl" id="ENSSSCT00115023006">
    <property type="protein sequence ID" value="ENSSSCP00115021815"/>
    <property type="gene ID" value="ENSSSCG00115013278"/>
</dbReference>
<dbReference type="Ensembl" id="ENSSSCT00130009076">
    <property type="protein sequence ID" value="ENSSSCP00130006043"/>
    <property type="gene ID" value="ENSSSCG00130004920"/>
</dbReference>
<dbReference type="GeneID" id="595114"/>
<dbReference type="KEGG" id="ssc:595114"/>
<dbReference type="CTD" id="403"/>
<dbReference type="VGNC" id="VGNC:107366">
    <property type="gene designation" value="ARL3"/>
</dbReference>
<dbReference type="eggNOG" id="KOG0074">
    <property type="taxonomic scope" value="Eukaryota"/>
</dbReference>
<dbReference type="GeneTree" id="ENSGT00940000155737"/>
<dbReference type="InParanoid" id="Q52NJ4"/>
<dbReference type="OMA" id="EGMEWVC"/>
<dbReference type="OrthoDB" id="2011769at2759"/>
<dbReference type="Proteomes" id="UP000008227">
    <property type="component" value="Chromosome 14"/>
</dbReference>
<dbReference type="Proteomes" id="UP000314985">
    <property type="component" value="Chromosome 14"/>
</dbReference>
<dbReference type="Proteomes" id="UP000694570">
    <property type="component" value="Unplaced"/>
</dbReference>
<dbReference type="Proteomes" id="UP000694571">
    <property type="component" value="Unplaced"/>
</dbReference>
<dbReference type="Proteomes" id="UP000694720">
    <property type="component" value="Unplaced"/>
</dbReference>
<dbReference type="Proteomes" id="UP000694722">
    <property type="component" value="Unplaced"/>
</dbReference>
<dbReference type="Proteomes" id="UP000694723">
    <property type="component" value="Unplaced"/>
</dbReference>
<dbReference type="Proteomes" id="UP000694724">
    <property type="component" value="Unplaced"/>
</dbReference>
<dbReference type="Proteomes" id="UP000694725">
    <property type="component" value="Unplaced"/>
</dbReference>
<dbReference type="Proteomes" id="UP000694726">
    <property type="component" value="Unplaced"/>
</dbReference>
<dbReference type="Proteomes" id="UP000694727">
    <property type="component" value="Unplaced"/>
</dbReference>
<dbReference type="Proteomes" id="UP000694728">
    <property type="component" value="Unplaced"/>
</dbReference>
<dbReference type="GO" id="GO:0005813">
    <property type="term" value="C:centrosome"/>
    <property type="evidence" value="ECO:0000250"/>
    <property type="project" value="UniProtKB"/>
</dbReference>
<dbReference type="GO" id="GO:0005929">
    <property type="term" value="C:cilium"/>
    <property type="evidence" value="ECO:0000250"/>
    <property type="project" value="UniProtKB"/>
</dbReference>
<dbReference type="GO" id="GO:0005881">
    <property type="term" value="C:cytoplasmic microtubule"/>
    <property type="evidence" value="ECO:0000250"/>
    <property type="project" value="UniProtKB"/>
</dbReference>
<dbReference type="GO" id="GO:0005794">
    <property type="term" value="C:Golgi apparatus"/>
    <property type="evidence" value="ECO:0000250"/>
    <property type="project" value="UniProtKB"/>
</dbReference>
<dbReference type="GO" id="GO:0000139">
    <property type="term" value="C:Golgi membrane"/>
    <property type="evidence" value="ECO:0007669"/>
    <property type="project" value="UniProtKB-SubCell"/>
</dbReference>
<dbReference type="GO" id="GO:0030496">
    <property type="term" value="C:midbody"/>
    <property type="evidence" value="ECO:0000250"/>
    <property type="project" value="UniProtKB"/>
</dbReference>
<dbReference type="GO" id="GO:0005634">
    <property type="term" value="C:nucleus"/>
    <property type="evidence" value="ECO:0000250"/>
    <property type="project" value="UniProtKB"/>
</dbReference>
<dbReference type="GO" id="GO:0032391">
    <property type="term" value="C:photoreceptor connecting cilium"/>
    <property type="evidence" value="ECO:0000250"/>
    <property type="project" value="UniProtKB"/>
</dbReference>
<dbReference type="GO" id="GO:0005876">
    <property type="term" value="C:spindle microtubule"/>
    <property type="evidence" value="ECO:0000250"/>
    <property type="project" value="UniProtKB"/>
</dbReference>
<dbReference type="GO" id="GO:0019003">
    <property type="term" value="F:GDP binding"/>
    <property type="evidence" value="ECO:0000250"/>
    <property type="project" value="UniProtKB"/>
</dbReference>
<dbReference type="GO" id="GO:0005525">
    <property type="term" value="F:GTP binding"/>
    <property type="evidence" value="ECO:0000250"/>
    <property type="project" value="UniProtKB"/>
</dbReference>
<dbReference type="GO" id="GO:0003924">
    <property type="term" value="F:GTPase activity"/>
    <property type="evidence" value="ECO:0000250"/>
    <property type="project" value="UniProtKB"/>
</dbReference>
<dbReference type="GO" id="GO:0046872">
    <property type="term" value="F:metal ion binding"/>
    <property type="evidence" value="ECO:0007669"/>
    <property type="project" value="UniProtKB-KW"/>
</dbReference>
<dbReference type="GO" id="GO:0008017">
    <property type="term" value="F:microtubule binding"/>
    <property type="evidence" value="ECO:0000250"/>
    <property type="project" value="UniProtKB"/>
</dbReference>
<dbReference type="GO" id="GO:0060271">
    <property type="term" value="P:cilium assembly"/>
    <property type="evidence" value="ECO:0000250"/>
    <property type="project" value="UniProtKB"/>
</dbReference>
<dbReference type="GO" id="GO:0006893">
    <property type="term" value="P:Golgi to plasma membrane transport"/>
    <property type="evidence" value="ECO:0000250"/>
    <property type="project" value="UniProtKB"/>
</dbReference>
<dbReference type="GO" id="GO:0001822">
    <property type="term" value="P:kidney development"/>
    <property type="evidence" value="ECO:0000250"/>
    <property type="project" value="UniProtKB"/>
</dbReference>
<dbReference type="GO" id="GO:0000281">
    <property type="term" value="P:mitotic cytokinesis"/>
    <property type="evidence" value="ECO:0000250"/>
    <property type="project" value="UniProtKB"/>
</dbReference>
<dbReference type="GO" id="GO:0042461">
    <property type="term" value="P:photoreceptor cell development"/>
    <property type="evidence" value="ECO:0000250"/>
    <property type="project" value="UniProtKB"/>
</dbReference>
<dbReference type="GO" id="GO:1903441">
    <property type="term" value="P:protein localization to ciliary membrane"/>
    <property type="evidence" value="ECO:0000250"/>
    <property type="project" value="UniProtKB"/>
</dbReference>
<dbReference type="GO" id="GO:0015031">
    <property type="term" value="P:protein transport"/>
    <property type="evidence" value="ECO:0007669"/>
    <property type="project" value="UniProtKB-KW"/>
</dbReference>
<dbReference type="GO" id="GO:0007264">
    <property type="term" value="P:small GTPase-mediated signal transduction"/>
    <property type="evidence" value="ECO:0000250"/>
    <property type="project" value="UniProtKB"/>
</dbReference>
<dbReference type="CDD" id="cd04155">
    <property type="entry name" value="Arl3"/>
    <property type="match status" value="1"/>
</dbReference>
<dbReference type="FunFam" id="3.40.50.300:FF:000281">
    <property type="entry name" value="ADP-ribosylation factor-like protein 3"/>
    <property type="match status" value="1"/>
</dbReference>
<dbReference type="Gene3D" id="3.40.50.300">
    <property type="entry name" value="P-loop containing nucleotide triphosphate hydrolases"/>
    <property type="match status" value="1"/>
</dbReference>
<dbReference type="InterPro" id="IPR044612">
    <property type="entry name" value="ARL2/3"/>
</dbReference>
<dbReference type="InterPro" id="IPR027417">
    <property type="entry name" value="P-loop_NTPase"/>
</dbReference>
<dbReference type="InterPro" id="IPR005225">
    <property type="entry name" value="Small_GTP-bd"/>
</dbReference>
<dbReference type="InterPro" id="IPR006689">
    <property type="entry name" value="Small_GTPase_ARF/SAR"/>
</dbReference>
<dbReference type="NCBIfam" id="TIGR00231">
    <property type="entry name" value="small_GTP"/>
    <property type="match status" value="1"/>
</dbReference>
<dbReference type="PANTHER" id="PTHR45697">
    <property type="entry name" value="ADP-RIBOSYLATION FACTOR-LIKE PROTEIN 2-RELATED"/>
    <property type="match status" value="1"/>
</dbReference>
<dbReference type="Pfam" id="PF00025">
    <property type="entry name" value="Arf"/>
    <property type="match status" value="1"/>
</dbReference>
<dbReference type="PRINTS" id="PR00328">
    <property type="entry name" value="SAR1GTPBP"/>
</dbReference>
<dbReference type="SMART" id="SM00177">
    <property type="entry name" value="ARF"/>
    <property type="match status" value="1"/>
</dbReference>
<dbReference type="SMART" id="SM00178">
    <property type="entry name" value="SAR"/>
    <property type="match status" value="1"/>
</dbReference>
<dbReference type="SUPFAM" id="SSF52540">
    <property type="entry name" value="P-loop containing nucleoside triphosphate hydrolases"/>
    <property type="match status" value="1"/>
</dbReference>
<dbReference type="PROSITE" id="PS51417">
    <property type="entry name" value="ARF"/>
    <property type="match status" value="1"/>
</dbReference>
<name>ARL3_PIG</name>